<proteinExistence type="inferred from homology"/>
<dbReference type="EMBL" id="AE017194">
    <property type="protein sequence ID" value="AAS43225.1"/>
    <property type="molecule type" value="Genomic_DNA"/>
</dbReference>
<dbReference type="SMR" id="Q730U2"/>
<dbReference type="KEGG" id="bca:BCE_4324"/>
<dbReference type="HOGENOM" id="CLU_019375_0_1_9"/>
<dbReference type="Proteomes" id="UP000002527">
    <property type="component" value="Chromosome"/>
</dbReference>
<dbReference type="GO" id="GO:0005886">
    <property type="term" value="C:plasma membrane"/>
    <property type="evidence" value="ECO:0007669"/>
    <property type="project" value="TreeGrafter"/>
</dbReference>
<dbReference type="GO" id="GO:0015184">
    <property type="term" value="F:L-cystine transmembrane transporter activity"/>
    <property type="evidence" value="ECO:0007669"/>
    <property type="project" value="TreeGrafter"/>
</dbReference>
<dbReference type="GO" id="GO:0015293">
    <property type="term" value="F:symporter activity"/>
    <property type="evidence" value="ECO:0007669"/>
    <property type="project" value="InterPro"/>
</dbReference>
<dbReference type="FunFam" id="1.10.3860.10:FF:000004">
    <property type="entry name" value="L-cystine transporter tcyP"/>
    <property type="match status" value="1"/>
</dbReference>
<dbReference type="Gene3D" id="1.10.3860.10">
    <property type="entry name" value="Sodium:dicarboxylate symporter"/>
    <property type="match status" value="1"/>
</dbReference>
<dbReference type="InterPro" id="IPR001991">
    <property type="entry name" value="Na-dicarboxylate_symporter"/>
</dbReference>
<dbReference type="InterPro" id="IPR036458">
    <property type="entry name" value="Na:dicarbo_symporter_sf"/>
</dbReference>
<dbReference type="PANTHER" id="PTHR42865:SF5">
    <property type="entry name" value="L-CYSTINE TRANSPORTER TCYP"/>
    <property type="match status" value="1"/>
</dbReference>
<dbReference type="PANTHER" id="PTHR42865">
    <property type="entry name" value="PROTON/GLUTAMATE-ASPARTATE SYMPORTER"/>
    <property type="match status" value="1"/>
</dbReference>
<dbReference type="Pfam" id="PF00375">
    <property type="entry name" value="SDF"/>
    <property type="match status" value="1"/>
</dbReference>
<dbReference type="PRINTS" id="PR00173">
    <property type="entry name" value="EDTRNSPORT"/>
</dbReference>
<dbReference type="SUPFAM" id="SSF118215">
    <property type="entry name" value="Proton glutamate symport protein"/>
    <property type="match status" value="1"/>
</dbReference>
<gene>
    <name type="ordered locus">BCE_4324</name>
</gene>
<accession>Q730U2</accession>
<sequence>MNTLLVGINVAVMLILVGVLYYMQRKHVSFNKRVFTALGVGIIFGLILQFIYEPTSKVIIESNTWFGLIGNGYVKLLQMIVMPLILVSIISAFTKLQLTKNLGKISGLIIGILILTTGIAAAVGIAASAGFDVSATGLQQGDAESARLKLVEERFTSIEKTTIPDKLLELLPTNPFLDLTGARPTSTISVVIFAAFIGIAFIGVKRKYPEQAELFKKMLDAVYAIVMRMVTLILRLTPYGVLALMAKTVAGSDINAILKLGNFVLASYVALIVMFVIHLLLIALSGLNPIQYLKKVFPVLTFAFTSRSSAGAMPLNIEAQKEKLGISEGIANFAASFGVSIGQNGCAGIYPAMLAMMVAPTVGIDPLQPQFILTLIAVVAISSFGVAGVGGGATFAALIVLSTMNLPIGIVALVISVEPLIDMGRTALNVSGSMTAGLISSKWLGELDQDTYNQDDTKTGEIAS</sequence>
<keyword id="KW-0029">Amino-acid transport</keyword>
<keyword id="KW-0472">Membrane</keyword>
<keyword id="KW-0812">Transmembrane</keyword>
<keyword id="KW-1133">Transmembrane helix</keyword>
<keyword id="KW-0813">Transport</keyword>
<protein>
    <recommendedName>
        <fullName>L-cystine uptake protein TcyP</fullName>
    </recommendedName>
    <alternativeName>
        <fullName>Transporter of cystine TcyP</fullName>
    </alternativeName>
</protein>
<evidence type="ECO:0000250" key="1"/>
<evidence type="ECO:0000255" key="2"/>
<evidence type="ECO:0000305" key="3"/>
<comment type="function">
    <text evidence="1">Mediates uptake of L-cystine, the oxidized form of L-cysteine.</text>
</comment>
<comment type="subcellular location">
    <subcellularLocation>
        <location evidence="3">Membrane</location>
        <topology evidence="3">Multi-pass membrane protein</topology>
    </subcellularLocation>
</comment>
<comment type="similarity">
    <text evidence="3">Belongs to the dicarboxylate/amino acid:cation symporter (DAACS) (TC 2.A.23) family.</text>
</comment>
<name>TCYP_BACC1</name>
<feature type="chain" id="PRO_0000279736" description="L-cystine uptake protein TcyP">
    <location>
        <begin position="1"/>
        <end position="464"/>
    </location>
</feature>
<feature type="transmembrane region" description="Helical" evidence="2">
    <location>
        <begin position="3"/>
        <end position="23"/>
    </location>
</feature>
<feature type="transmembrane region" description="Helical" evidence="2">
    <location>
        <begin position="34"/>
        <end position="54"/>
    </location>
</feature>
<feature type="transmembrane region" description="Helical" evidence="2">
    <location>
        <begin position="73"/>
        <end position="93"/>
    </location>
</feature>
<feature type="transmembrane region" description="Helical" evidence="2">
    <location>
        <begin position="107"/>
        <end position="127"/>
    </location>
</feature>
<feature type="transmembrane region" description="Helical" evidence="2">
    <location>
        <begin position="184"/>
        <end position="204"/>
    </location>
</feature>
<feature type="transmembrane region" description="Helical" evidence="2">
    <location>
        <begin position="225"/>
        <end position="245"/>
    </location>
</feature>
<feature type="transmembrane region" description="Helical" evidence="2">
    <location>
        <begin position="263"/>
        <end position="283"/>
    </location>
</feature>
<feature type="transmembrane region" description="Helical" evidence="2">
    <location>
        <begin position="347"/>
        <end position="367"/>
    </location>
</feature>
<feature type="transmembrane region" description="Helical" evidence="2">
    <location>
        <begin position="371"/>
        <end position="391"/>
    </location>
</feature>
<feature type="transmembrane region" description="Helical" evidence="2">
    <location>
        <begin position="395"/>
        <end position="415"/>
    </location>
</feature>
<reference key="1">
    <citation type="journal article" date="2004" name="Nucleic Acids Res.">
        <title>The genome sequence of Bacillus cereus ATCC 10987 reveals metabolic adaptations and a large plasmid related to Bacillus anthracis pXO1.</title>
        <authorList>
            <person name="Rasko D.A."/>
            <person name="Ravel J."/>
            <person name="Oekstad O.A."/>
            <person name="Helgason E."/>
            <person name="Cer R.Z."/>
            <person name="Jiang L."/>
            <person name="Shores K.A."/>
            <person name="Fouts D.E."/>
            <person name="Tourasse N.J."/>
            <person name="Angiuoli S.V."/>
            <person name="Kolonay J.F."/>
            <person name="Nelson W.C."/>
            <person name="Kolstoe A.-B."/>
            <person name="Fraser C.M."/>
            <person name="Read T.D."/>
        </authorList>
    </citation>
    <scope>NUCLEOTIDE SEQUENCE [LARGE SCALE GENOMIC DNA]</scope>
    <source>
        <strain>ATCC 10987 / NRS 248</strain>
    </source>
</reference>
<organism>
    <name type="scientific">Bacillus cereus (strain ATCC 10987 / NRS 248)</name>
    <dbReference type="NCBI Taxonomy" id="222523"/>
    <lineage>
        <taxon>Bacteria</taxon>
        <taxon>Bacillati</taxon>
        <taxon>Bacillota</taxon>
        <taxon>Bacilli</taxon>
        <taxon>Bacillales</taxon>
        <taxon>Bacillaceae</taxon>
        <taxon>Bacillus</taxon>
        <taxon>Bacillus cereus group</taxon>
    </lineage>
</organism>